<gene>
    <name evidence="1" type="primary">asnA</name>
    <name type="ordered locus">SeAg_B4104</name>
</gene>
<reference key="1">
    <citation type="journal article" date="2011" name="J. Bacteriol.">
        <title>Comparative genomics of 28 Salmonella enterica isolates: evidence for CRISPR-mediated adaptive sublineage evolution.</title>
        <authorList>
            <person name="Fricke W.F."/>
            <person name="Mammel M.K."/>
            <person name="McDermott P.F."/>
            <person name="Tartera C."/>
            <person name="White D.G."/>
            <person name="Leclerc J.E."/>
            <person name="Ravel J."/>
            <person name="Cebula T.A."/>
        </authorList>
    </citation>
    <scope>NUCLEOTIDE SEQUENCE [LARGE SCALE GENOMIC DNA]</scope>
    <source>
        <strain>SL483</strain>
    </source>
</reference>
<keyword id="KW-0028">Amino-acid biosynthesis</keyword>
<keyword id="KW-0061">Asparagine biosynthesis</keyword>
<keyword id="KW-0067">ATP-binding</keyword>
<keyword id="KW-0963">Cytoplasm</keyword>
<keyword id="KW-0436">Ligase</keyword>
<keyword id="KW-0547">Nucleotide-binding</keyword>
<name>ASNA_SALA4</name>
<feature type="chain" id="PRO_1000129123" description="Aspartate--ammonia ligase">
    <location>
        <begin position="1"/>
        <end position="330"/>
    </location>
</feature>
<organism>
    <name type="scientific">Salmonella agona (strain SL483)</name>
    <dbReference type="NCBI Taxonomy" id="454166"/>
    <lineage>
        <taxon>Bacteria</taxon>
        <taxon>Pseudomonadati</taxon>
        <taxon>Pseudomonadota</taxon>
        <taxon>Gammaproteobacteria</taxon>
        <taxon>Enterobacterales</taxon>
        <taxon>Enterobacteriaceae</taxon>
        <taxon>Salmonella</taxon>
    </lineage>
</organism>
<comment type="catalytic activity">
    <reaction evidence="1">
        <text>L-aspartate + NH4(+) + ATP = L-asparagine + AMP + diphosphate + H(+)</text>
        <dbReference type="Rhea" id="RHEA:11372"/>
        <dbReference type="ChEBI" id="CHEBI:15378"/>
        <dbReference type="ChEBI" id="CHEBI:28938"/>
        <dbReference type="ChEBI" id="CHEBI:29991"/>
        <dbReference type="ChEBI" id="CHEBI:30616"/>
        <dbReference type="ChEBI" id="CHEBI:33019"/>
        <dbReference type="ChEBI" id="CHEBI:58048"/>
        <dbReference type="ChEBI" id="CHEBI:456215"/>
        <dbReference type="EC" id="6.3.1.1"/>
    </reaction>
</comment>
<comment type="pathway">
    <text evidence="1">Amino-acid biosynthesis; L-asparagine biosynthesis; L-asparagine from L-aspartate (ammonia route): step 1/1.</text>
</comment>
<comment type="subcellular location">
    <subcellularLocation>
        <location evidence="1">Cytoplasm</location>
    </subcellularLocation>
</comment>
<comment type="similarity">
    <text evidence="1">Belongs to the class-II aminoacyl-tRNA synthetase family. AsnA subfamily.</text>
</comment>
<protein>
    <recommendedName>
        <fullName evidence="1">Aspartate--ammonia ligase</fullName>
        <ecNumber evidence="1">6.3.1.1</ecNumber>
    </recommendedName>
    <alternativeName>
        <fullName evidence="1">Asparagine synthetase A</fullName>
    </alternativeName>
</protein>
<accession>B5EZ10</accession>
<proteinExistence type="inferred from homology"/>
<dbReference type="EC" id="6.3.1.1" evidence="1"/>
<dbReference type="EMBL" id="CP001138">
    <property type="protein sequence ID" value="ACH49077.1"/>
    <property type="molecule type" value="Genomic_DNA"/>
</dbReference>
<dbReference type="RefSeq" id="WP_000845125.1">
    <property type="nucleotide sequence ID" value="NC_011149.1"/>
</dbReference>
<dbReference type="SMR" id="B5EZ10"/>
<dbReference type="KEGG" id="sea:SeAg_B4104"/>
<dbReference type="HOGENOM" id="CLU_071543_0_0_6"/>
<dbReference type="UniPathway" id="UPA00134">
    <property type="reaction ID" value="UER00194"/>
</dbReference>
<dbReference type="Proteomes" id="UP000008819">
    <property type="component" value="Chromosome"/>
</dbReference>
<dbReference type="GO" id="GO:0005829">
    <property type="term" value="C:cytosol"/>
    <property type="evidence" value="ECO:0007669"/>
    <property type="project" value="TreeGrafter"/>
</dbReference>
<dbReference type="GO" id="GO:0004071">
    <property type="term" value="F:aspartate-ammonia ligase activity"/>
    <property type="evidence" value="ECO:0007669"/>
    <property type="project" value="UniProtKB-UniRule"/>
</dbReference>
<dbReference type="GO" id="GO:0005524">
    <property type="term" value="F:ATP binding"/>
    <property type="evidence" value="ECO:0007669"/>
    <property type="project" value="UniProtKB-UniRule"/>
</dbReference>
<dbReference type="GO" id="GO:0070981">
    <property type="term" value="P:L-asparagine biosynthetic process"/>
    <property type="evidence" value="ECO:0007669"/>
    <property type="project" value="UniProtKB-UniRule"/>
</dbReference>
<dbReference type="CDD" id="cd00645">
    <property type="entry name" value="AsnA"/>
    <property type="match status" value="1"/>
</dbReference>
<dbReference type="FunFam" id="3.30.930.10:FF:000025">
    <property type="entry name" value="Aspartate--ammonia ligase"/>
    <property type="match status" value="1"/>
</dbReference>
<dbReference type="Gene3D" id="3.30.930.10">
    <property type="entry name" value="Bira Bifunctional Protein, Domain 2"/>
    <property type="match status" value="1"/>
</dbReference>
<dbReference type="HAMAP" id="MF_00555">
    <property type="entry name" value="AsnA"/>
    <property type="match status" value="1"/>
</dbReference>
<dbReference type="InterPro" id="IPR006195">
    <property type="entry name" value="aa-tRNA-synth_II"/>
</dbReference>
<dbReference type="InterPro" id="IPR045864">
    <property type="entry name" value="aa-tRNA-synth_II/BPL/LPL"/>
</dbReference>
<dbReference type="InterPro" id="IPR004618">
    <property type="entry name" value="AsnA"/>
</dbReference>
<dbReference type="NCBIfam" id="TIGR00669">
    <property type="entry name" value="asnA"/>
    <property type="match status" value="1"/>
</dbReference>
<dbReference type="PANTHER" id="PTHR30073">
    <property type="entry name" value="ASPARTATE--AMMONIA LIGASE"/>
    <property type="match status" value="1"/>
</dbReference>
<dbReference type="PANTHER" id="PTHR30073:SF5">
    <property type="entry name" value="ASPARTATE--AMMONIA LIGASE"/>
    <property type="match status" value="1"/>
</dbReference>
<dbReference type="Pfam" id="PF03590">
    <property type="entry name" value="AsnA"/>
    <property type="match status" value="1"/>
</dbReference>
<dbReference type="PIRSF" id="PIRSF001555">
    <property type="entry name" value="Asp_ammon_ligase"/>
    <property type="match status" value="1"/>
</dbReference>
<dbReference type="SUPFAM" id="SSF55681">
    <property type="entry name" value="Class II aaRS and biotin synthetases"/>
    <property type="match status" value="1"/>
</dbReference>
<dbReference type="PROSITE" id="PS50862">
    <property type="entry name" value="AA_TRNA_LIGASE_II"/>
    <property type="match status" value="1"/>
</dbReference>
<sequence>MKTAYIAKQRQISFVKSHFSRQLEERLGLIEVQAPILSRVGDGTQDNLSGCEKAVQVKVKALPDAQFEVVHSLAKWKRQTLGQHDFSAGEGLYTHMKALRPDEDRLSPLHSVYVDQWDWERVMGDGERQFSTLKSTVEAIWAGIKATEAEVHKQFGLAPFLPEQIQFVHSQELLSRYPDLDAKGRERAIAKELGAVFLVGIGGKLSDGHRHDVRAPDYDDWSSASELGYAGLNGDILVWNPVLEDAFELSSMGIRVDADTLMRQLALTGDEDRLQLVWHQALLRGEMPQTIGGGIGQSRLTMLLLQLPHIGQVQCGVWPAQVRESIPAIL</sequence>
<evidence type="ECO:0000255" key="1">
    <source>
        <dbReference type="HAMAP-Rule" id="MF_00555"/>
    </source>
</evidence>